<name>SCPA_STAHJ</name>
<gene>
    <name evidence="1" type="primary">scpA</name>
    <name type="ordered locus">SH1421</name>
</gene>
<accession>Q4L6J5</accession>
<proteinExistence type="inferred from homology"/>
<protein>
    <recommendedName>
        <fullName evidence="1">Segregation and condensation protein A</fullName>
    </recommendedName>
</protein>
<organism>
    <name type="scientific">Staphylococcus haemolyticus (strain JCSC1435)</name>
    <dbReference type="NCBI Taxonomy" id="279808"/>
    <lineage>
        <taxon>Bacteria</taxon>
        <taxon>Bacillati</taxon>
        <taxon>Bacillota</taxon>
        <taxon>Bacilli</taxon>
        <taxon>Bacillales</taxon>
        <taxon>Staphylococcaceae</taxon>
        <taxon>Staphylococcus</taxon>
    </lineage>
</organism>
<comment type="function">
    <text evidence="1">Participates in chromosomal partition during cell division. May act via the formation of a condensin-like complex containing Smc and ScpB that pull DNA away from mid-cell into both cell halves.</text>
</comment>
<comment type="subunit">
    <text evidence="1">Component of a cohesin-like complex composed of ScpA, ScpB and the Smc homodimer, in which ScpA and ScpB bind to the head domain of Smc. The presence of the three proteins is required for the association of the complex with DNA.</text>
</comment>
<comment type="subcellular location">
    <subcellularLocation>
        <location evidence="1">Cytoplasm</location>
    </subcellularLocation>
    <text evidence="1">Associated with two foci at the outer edges of the nucleoid region in young cells, and at four foci within both cell halves in older cells.</text>
</comment>
<comment type="similarity">
    <text evidence="1">Belongs to the ScpA family.</text>
</comment>
<feature type="chain" id="PRO_0000211108" description="Segregation and condensation protein A">
    <location>
        <begin position="1"/>
        <end position="243"/>
    </location>
</feature>
<evidence type="ECO:0000255" key="1">
    <source>
        <dbReference type="HAMAP-Rule" id="MF_01805"/>
    </source>
</evidence>
<dbReference type="EMBL" id="AP006716">
    <property type="protein sequence ID" value="BAE04730.1"/>
    <property type="molecule type" value="Genomic_DNA"/>
</dbReference>
<dbReference type="RefSeq" id="WP_011275717.1">
    <property type="nucleotide sequence ID" value="NC_007168.1"/>
</dbReference>
<dbReference type="SMR" id="Q4L6J5"/>
<dbReference type="KEGG" id="sha:SH1421"/>
<dbReference type="eggNOG" id="COG1354">
    <property type="taxonomic scope" value="Bacteria"/>
</dbReference>
<dbReference type="HOGENOM" id="CLU_038686_3_1_9"/>
<dbReference type="OrthoDB" id="9811016at2"/>
<dbReference type="Proteomes" id="UP000000543">
    <property type="component" value="Chromosome"/>
</dbReference>
<dbReference type="GO" id="GO:0005737">
    <property type="term" value="C:cytoplasm"/>
    <property type="evidence" value="ECO:0007669"/>
    <property type="project" value="UniProtKB-SubCell"/>
</dbReference>
<dbReference type="GO" id="GO:0051301">
    <property type="term" value="P:cell division"/>
    <property type="evidence" value="ECO:0007669"/>
    <property type="project" value="UniProtKB-KW"/>
</dbReference>
<dbReference type="GO" id="GO:0007059">
    <property type="term" value="P:chromosome segregation"/>
    <property type="evidence" value="ECO:0007669"/>
    <property type="project" value="UniProtKB-UniRule"/>
</dbReference>
<dbReference type="GO" id="GO:0006260">
    <property type="term" value="P:DNA replication"/>
    <property type="evidence" value="ECO:0007669"/>
    <property type="project" value="UniProtKB-UniRule"/>
</dbReference>
<dbReference type="Gene3D" id="6.10.250.2410">
    <property type="match status" value="1"/>
</dbReference>
<dbReference type="Gene3D" id="1.10.10.580">
    <property type="entry name" value="Structural maintenance of chromosome 1. Chain E"/>
    <property type="match status" value="1"/>
</dbReference>
<dbReference type="HAMAP" id="MF_01805">
    <property type="entry name" value="ScpA"/>
    <property type="match status" value="1"/>
</dbReference>
<dbReference type="InterPro" id="IPR003768">
    <property type="entry name" value="ScpA"/>
</dbReference>
<dbReference type="InterPro" id="IPR023093">
    <property type="entry name" value="ScpA-like_C"/>
</dbReference>
<dbReference type="PANTHER" id="PTHR33969">
    <property type="entry name" value="SEGREGATION AND CONDENSATION PROTEIN A"/>
    <property type="match status" value="1"/>
</dbReference>
<dbReference type="PANTHER" id="PTHR33969:SF2">
    <property type="entry name" value="SEGREGATION AND CONDENSATION PROTEIN A"/>
    <property type="match status" value="1"/>
</dbReference>
<dbReference type="Pfam" id="PF02616">
    <property type="entry name" value="SMC_ScpA"/>
    <property type="match status" value="1"/>
</dbReference>
<reference key="1">
    <citation type="journal article" date="2005" name="J. Bacteriol.">
        <title>Whole-genome sequencing of Staphylococcus haemolyticus uncovers the extreme plasticity of its genome and the evolution of human-colonizing staphylococcal species.</title>
        <authorList>
            <person name="Takeuchi F."/>
            <person name="Watanabe S."/>
            <person name="Baba T."/>
            <person name="Yuzawa H."/>
            <person name="Ito T."/>
            <person name="Morimoto Y."/>
            <person name="Kuroda M."/>
            <person name="Cui L."/>
            <person name="Takahashi M."/>
            <person name="Ankai A."/>
            <person name="Baba S."/>
            <person name="Fukui S."/>
            <person name="Lee J.C."/>
            <person name="Hiramatsu K."/>
        </authorList>
    </citation>
    <scope>NUCLEOTIDE SEQUENCE [LARGE SCALE GENOMIC DNA]</scope>
    <source>
        <strain>JCSC1435</strain>
    </source>
</reference>
<sequence>MYEVKLDAFNGPLDLLLHLIQKYEIDIYDIPMKSLTEQYMQYVHAMKQLEINVASEYLVMASELLMIKSKLLLPQHDVDDNLEEDPREDLVGRLIEYQNYKEYTQLLTEKKEEREHYFTKHPTDLSHLEKNVTWDECQTLDLTDLIVAYQRVKSRLALNKPKTVEIIKESFTIQQATEKVTTQLRHHTSFNFFSLFTFSEPIEQVVTHFLAILEMSKSGVINIEQVRSFDDIRIIRGVNFNIG</sequence>
<keyword id="KW-0131">Cell cycle</keyword>
<keyword id="KW-0132">Cell division</keyword>
<keyword id="KW-0159">Chromosome partition</keyword>
<keyword id="KW-0963">Cytoplasm</keyword>